<dbReference type="EMBL" id="CP001161">
    <property type="protein sequence ID" value="ACL30543.1"/>
    <property type="molecule type" value="Genomic_DNA"/>
</dbReference>
<dbReference type="RefSeq" id="WP_009874128.1">
    <property type="nucleotide sequence ID" value="NC_011833.1"/>
</dbReference>
<dbReference type="SMR" id="B8D8X1"/>
<dbReference type="KEGG" id="bap:BUAP5A_168"/>
<dbReference type="HOGENOM" id="CLU_036856_0_1_6"/>
<dbReference type="OrthoDB" id="9806673at2"/>
<dbReference type="Proteomes" id="UP000006904">
    <property type="component" value="Chromosome"/>
</dbReference>
<dbReference type="GO" id="GO:0005737">
    <property type="term" value="C:cytoplasm"/>
    <property type="evidence" value="ECO:0007669"/>
    <property type="project" value="UniProtKB-SubCell"/>
</dbReference>
<dbReference type="GO" id="GO:0016149">
    <property type="term" value="F:translation release factor activity, codon specific"/>
    <property type="evidence" value="ECO:0007669"/>
    <property type="project" value="UniProtKB-UniRule"/>
</dbReference>
<dbReference type="FunFam" id="3.30.160.20:FF:000004">
    <property type="entry name" value="Peptide chain release factor 1"/>
    <property type="match status" value="1"/>
</dbReference>
<dbReference type="FunFam" id="3.30.70.1660:FF:000002">
    <property type="entry name" value="Peptide chain release factor 1"/>
    <property type="match status" value="1"/>
</dbReference>
<dbReference type="FunFam" id="3.30.70.1660:FF:000004">
    <property type="entry name" value="Peptide chain release factor 1"/>
    <property type="match status" value="1"/>
</dbReference>
<dbReference type="Gene3D" id="3.30.160.20">
    <property type="match status" value="1"/>
</dbReference>
<dbReference type="Gene3D" id="3.30.70.1660">
    <property type="match status" value="1"/>
</dbReference>
<dbReference type="Gene3D" id="6.10.140.1950">
    <property type="match status" value="1"/>
</dbReference>
<dbReference type="HAMAP" id="MF_00093">
    <property type="entry name" value="Rel_fac_1"/>
    <property type="match status" value="1"/>
</dbReference>
<dbReference type="InterPro" id="IPR005139">
    <property type="entry name" value="PCRF"/>
</dbReference>
<dbReference type="InterPro" id="IPR000352">
    <property type="entry name" value="Pep_chain_release_fac_I"/>
</dbReference>
<dbReference type="InterPro" id="IPR045853">
    <property type="entry name" value="Pep_chain_release_fac_I_sf"/>
</dbReference>
<dbReference type="InterPro" id="IPR050057">
    <property type="entry name" value="Prokaryotic/Mito_RF"/>
</dbReference>
<dbReference type="InterPro" id="IPR004373">
    <property type="entry name" value="RF-1"/>
</dbReference>
<dbReference type="NCBIfam" id="TIGR00019">
    <property type="entry name" value="prfA"/>
    <property type="match status" value="1"/>
</dbReference>
<dbReference type="NCBIfam" id="NF001859">
    <property type="entry name" value="PRK00591.1"/>
    <property type="match status" value="1"/>
</dbReference>
<dbReference type="PANTHER" id="PTHR43804">
    <property type="entry name" value="LD18447P"/>
    <property type="match status" value="1"/>
</dbReference>
<dbReference type="PANTHER" id="PTHR43804:SF7">
    <property type="entry name" value="LD18447P"/>
    <property type="match status" value="1"/>
</dbReference>
<dbReference type="Pfam" id="PF03462">
    <property type="entry name" value="PCRF"/>
    <property type="match status" value="1"/>
</dbReference>
<dbReference type="Pfam" id="PF00472">
    <property type="entry name" value="RF-1"/>
    <property type="match status" value="1"/>
</dbReference>
<dbReference type="SMART" id="SM00937">
    <property type="entry name" value="PCRF"/>
    <property type="match status" value="1"/>
</dbReference>
<dbReference type="SUPFAM" id="SSF75620">
    <property type="entry name" value="Release factor"/>
    <property type="match status" value="1"/>
</dbReference>
<dbReference type="PROSITE" id="PS00745">
    <property type="entry name" value="RF_PROK_I"/>
    <property type="match status" value="1"/>
</dbReference>
<keyword id="KW-0963">Cytoplasm</keyword>
<keyword id="KW-0488">Methylation</keyword>
<keyword id="KW-0648">Protein biosynthesis</keyword>
<evidence type="ECO:0000255" key="1">
    <source>
        <dbReference type="HAMAP-Rule" id="MF_00093"/>
    </source>
</evidence>
<protein>
    <recommendedName>
        <fullName evidence="1">Peptide chain release factor 1</fullName>
        <shortName evidence="1">RF-1</shortName>
    </recommendedName>
</protein>
<sequence length="361" mass="41262">MNNSILNKLKSLRNRYQEIEIMLTQKNVISNRENLKTLSKEYLKLSEIIKYFIEWEKLEVDIENVNILLNDVEIQGMAEEELYFFNKKKKALEKKINQLLLPEDPNDKHSCFIEIRSATGGDESSIFAGELFRMYLRYAESYSWKVEIMNTSESEKGGFKEIIAKITGRGACGRLKFESGGHRVQRVPETESQGRIHTSTCTVAVMPVTPKTEKEEINSSDLKIDTFRSSGAGGQHVNTTDSAIRITHIPTGNVVECQDERSQHKNKAKALSILSARVYAAKLEKDRQESSSMRKILLGTGERSDRNRTYNFPQNRITDHRINLSIYKLDEVLQGKLDLLIDPIIQEYQADMLSSLSKSES</sequence>
<comment type="function">
    <text evidence="1">Peptide chain release factor 1 directs the termination of translation in response to the peptide chain termination codons UAG and UAA.</text>
</comment>
<comment type="subcellular location">
    <subcellularLocation>
        <location evidence="1">Cytoplasm</location>
    </subcellularLocation>
</comment>
<comment type="PTM">
    <text evidence="1">Methylated by PrmC. Methylation increases the termination efficiency of RF1.</text>
</comment>
<comment type="similarity">
    <text evidence="1">Belongs to the prokaryotic/mitochondrial release factor family.</text>
</comment>
<reference key="1">
    <citation type="journal article" date="2009" name="Science">
        <title>The dynamics and time scale of ongoing genomic erosion in symbiotic bacteria.</title>
        <authorList>
            <person name="Moran N.A."/>
            <person name="McLaughlin H.J."/>
            <person name="Sorek R."/>
        </authorList>
    </citation>
    <scope>NUCLEOTIDE SEQUENCE [LARGE SCALE GENOMIC DNA]</scope>
    <source>
        <strain>5A</strain>
    </source>
</reference>
<name>RF1_BUCA5</name>
<organism>
    <name type="scientific">Buchnera aphidicola subsp. Acyrthosiphon pisum (strain 5A)</name>
    <dbReference type="NCBI Taxonomy" id="563178"/>
    <lineage>
        <taxon>Bacteria</taxon>
        <taxon>Pseudomonadati</taxon>
        <taxon>Pseudomonadota</taxon>
        <taxon>Gammaproteobacteria</taxon>
        <taxon>Enterobacterales</taxon>
        <taxon>Erwiniaceae</taxon>
        <taxon>Buchnera</taxon>
    </lineage>
</organism>
<proteinExistence type="inferred from homology"/>
<feature type="chain" id="PRO_1000193476" description="Peptide chain release factor 1">
    <location>
        <begin position="1"/>
        <end position="361"/>
    </location>
</feature>
<feature type="modified residue" description="N5-methylglutamine" evidence="1">
    <location>
        <position position="235"/>
    </location>
</feature>
<gene>
    <name evidence="1" type="primary">prfA</name>
    <name type="ordered locus">BUAP5A_168</name>
</gene>
<accession>B8D8X1</accession>